<sequence length="474" mass="52622">MTTPVVTRFAPSPTGFLHIGGGRTALFNWLYARKHGGRMLLRIEDTDRARSTPEAIDAILDGLKWLGIEWDDDVVYQFSRVARHREIAEQLLAEGKAYRCYATTEELSEMREKARAEGRAKLYDGRWRDRDASEAPQGVKPTIRLKAPLTGETVIEDQVQGRIVWQNENLDDLVLLRGDGTPTYMLAVVVDDHDMGVTHIIRGDDHLINAARQKQIYDTLGWALPTMAHIPLIHGPDGSKLSKRHGALGVDAYRAMGYLPAALRNYLVRLGWSHGDQEIFSTQEMIDAFDLPAIGRSAARFDFAKLENLNGHYIRHCDDAALMTLFENALDFVPGGADLKPKLNDVTRAQLLRAMPGLKERAKTLIELIEGARFIFADRPLPIEAKAAALLTPETRALIDRLRAALESVTSWNAETTEAAMRTFAEQNNLKLGAIAQPLRIALTGRTTSPGIFDVLAALGKETCLARLGDQGSR</sequence>
<evidence type="ECO:0000255" key="1">
    <source>
        <dbReference type="HAMAP-Rule" id="MF_00022"/>
    </source>
</evidence>
<evidence type="ECO:0000305" key="2"/>
<keyword id="KW-0030">Aminoacyl-tRNA synthetase</keyword>
<keyword id="KW-0067">ATP-binding</keyword>
<keyword id="KW-0963">Cytoplasm</keyword>
<keyword id="KW-0436">Ligase</keyword>
<keyword id="KW-0547">Nucleotide-binding</keyword>
<keyword id="KW-0648">Protein biosynthesis</keyword>
<keyword id="KW-1185">Reference proteome</keyword>
<accession>Q3SRI7</accession>
<protein>
    <recommendedName>
        <fullName evidence="1">Glutamate--tRNA ligase</fullName>
        <ecNumber evidence="1">6.1.1.17</ecNumber>
    </recommendedName>
    <alternativeName>
        <fullName evidence="1">Glutamyl-tRNA synthetase</fullName>
        <shortName evidence="1">GluRS</shortName>
    </alternativeName>
</protein>
<dbReference type="EC" id="6.1.1.17" evidence="1"/>
<dbReference type="EMBL" id="CP000115">
    <property type="protein sequence ID" value="ABA05104.1"/>
    <property type="status" value="ALT_INIT"/>
    <property type="molecule type" value="Genomic_DNA"/>
</dbReference>
<dbReference type="RefSeq" id="WP_041344971.1">
    <property type="nucleotide sequence ID" value="NC_007406.1"/>
</dbReference>
<dbReference type="SMR" id="Q3SRI7"/>
<dbReference type="STRING" id="323098.Nwi_1844"/>
<dbReference type="KEGG" id="nwi:Nwi_1844"/>
<dbReference type="eggNOG" id="COG0008">
    <property type="taxonomic scope" value="Bacteria"/>
</dbReference>
<dbReference type="HOGENOM" id="CLU_015768_6_0_5"/>
<dbReference type="OrthoDB" id="9807503at2"/>
<dbReference type="Proteomes" id="UP000002531">
    <property type="component" value="Chromosome"/>
</dbReference>
<dbReference type="GO" id="GO:0005829">
    <property type="term" value="C:cytosol"/>
    <property type="evidence" value="ECO:0007669"/>
    <property type="project" value="TreeGrafter"/>
</dbReference>
<dbReference type="GO" id="GO:0005524">
    <property type="term" value="F:ATP binding"/>
    <property type="evidence" value="ECO:0007669"/>
    <property type="project" value="UniProtKB-UniRule"/>
</dbReference>
<dbReference type="GO" id="GO:0004818">
    <property type="term" value="F:glutamate-tRNA ligase activity"/>
    <property type="evidence" value="ECO:0007669"/>
    <property type="project" value="UniProtKB-UniRule"/>
</dbReference>
<dbReference type="GO" id="GO:0000049">
    <property type="term" value="F:tRNA binding"/>
    <property type="evidence" value="ECO:0007669"/>
    <property type="project" value="InterPro"/>
</dbReference>
<dbReference type="GO" id="GO:0008270">
    <property type="term" value="F:zinc ion binding"/>
    <property type="evidence" value="ECO:0007669"/>
    <property type="project" value="InterPro"/>
</dbReference>
<dbReference type="GO" id="GO:0006424">
    <property type="term" value="P:glutamyl-tRNA aminoacylation"/>
    <property type="evidence" value="ECO:0007669"/>
    <property type="project" value="UniProtKB-UniRule"/>
</dbReference>
<dbReference type="CDD" id="cd00808">
    <property type="entry name" value="GluRS_core"/>
    <property type="match status" value="1"/>
</dbReference>
<dbReference type="FunFam" id="3.40.50.620:FF:000007">
    <property type="entry name" value="Glutamate--tRNA ligase"/>
    <property type="match status" value="1"/>
</dbReference>
<dbReference type="Gene3D" id="1.10.10.350">
    <property type="match status" value="1"/>
</dbReference>
<dbReference type="Gene3D" id="3.40.50.620">
    <property type="entry name" value="HUPs"/>
    <property type="match status" value="1"/>
</dbReference>
<dbReference type="HAMAP" id="MF_00022">
    <property type="entry name" value="Glu_tRNA_synth_type1"/>
    <property type="match status" value="1"/>
</dbReference>
<dbReference type="InterPro" id="IPR045462">
    <property type="entry name" value="aa-tRNA-synth_I_cd-bd"/>
</dbReference>
<dbReference type="InterPro" id="IPR020751">
    <property type="entry name" value="aa-tRNA-synth_I_codon-bd_sub2"/>
</dbReference>
<dbReference type="InterPro" id="IPR001412">
    <property type="entry name" value="aa-tRNA-synth_I_CS"/>
</dbReference>
<dbReference type="InterPro" id="IPR008925">
    <property type="entry name" value="aa_tRNA-synth_I_cd-bd_sf"/>
</dbReference>
<dbReference type="InterPro" id="IPR004527">
    <property type="entry name" value="Glu-tRNA-ligase_bac/mito"/>
</dbReference>
<dbReference type="InterPro" id="IPR000924">
    <property type="entry name" value="Glu/Gln-tRNA-synth"/>
</dbReference>
<dbReference type="InterPro" id="IPR020058">
    <property type="entry name" value="Glu/Gln-tRNA-synth_Ib_cat-dom"/>
</dbReference>
<dbReference type="InterPro" id="IPR049940">
    <property type="entry name" value="GluQ/Sye"/>
</dbReference>
<dbReference type="InterPro" id="IPR033910">
    <property type="entry name" value="GluRS_core"/>
</dbReference>
<dbReference type="InterPro" id="IPR014729">
    <property type="entry name" value="Rossmann-like_a/b/a_fold"/>
</dbReference>
<dbReference type="NCBIfam" id="TIGR00464">
    <property type="entry name" value="gltX_bact"/>
    <property type="match status" value="1"/>
</dbReference>
<dbReference type="PANTHER" id="PTHR43311">
    <property type="entry name" value="GLUTAMATE--TRNA LIGASE"/>
    <property type="match status" value="1"/>
</dbReference>
<dbReference type="PANTHER" id="PTHR43311:SF2">
    <property type="entry name" value="GLUTAMATE--TRNA LIGASE, MITOCHONDRIAL-RELATED"/>
    <property type="match status" value="1"/>
</dbReference>
<dbReference type="Pfam" id="PF19269">
    <property type="entry name" value="Anticodon_2"/>
    <property type="match status" value="1"/>
</dbReference>
<dbReference type="Pfam" id="PF00749">
    <property type="entry name" value="tRNA-synt_1c"/>
    <property type="match status" value="1"/>
</dbReference>
<dbReference type="PRINTS" id="PR00987">
    <property type="entry name" value="TRNASYNTHGLU"/>
</dbReference>
<dbReference type="SUPFAM" id="SSF48163">
    <property type="entry name" value="An anticodon-binding domain of class I aminoacyl-tRNA synthetases"/>
    <property type="match status" value="1"/>
</dbReference>
<dbReference type="SUPFAM" id="SSF52374">
    <property type="entry name" value="Nucleotidylyl transferase"/>
    <property type="match status" value="1"/>
</dbReference>
<dbReference type="PROSITE" id="PS00178">
    <property type="entry name" value="AA_TRNA_LIGASE_I"/>
    <property type="match status" value="1"/>
</dbReference>
<reference key="1">
    <citation type="journal article" date="2006" name="Appl. Environ. Microbiol.">
        <title>Genome sequence of the chemolithoautotrophic nitrite-oxidizing bacterium Nitrobacter winogradskyi Nb-255.</title>
        <authorList>
            <person name="Starkenburg S.R."/>
            <person name="Chain P.S.G."/>
            <person name="Sayavedra-Soto L.A."/>
            <person name="Hauser L."/>
            <person name="Land M.L."/>
            <person name="Larimer F.W."/>
            <person name="Malfatti S.A."/>
            <person name="Klotz M.G."/>
            <person name="Bottomley P.J."/>
            <person name="Arp D.J."/>
            <person name="Hickey W.J."/>
        </authorList>
    </citation>
    <scope>NUCLEOTIDE SEQUENCE [LARGE SCALE GENOMIC DNA]</scope>
    <source>
        <strain>ATCC 25391 / DSM 10237 / CIP 104748 / NCIMB 11846 / Nb-255</strain>
    </source>
</reference>
<organism>
    <name type="scientific">Nitrobacter winogradskyi (strain ATCC 25391 / DSM 10237 / CIP 104748 / NCIMB 11846 / Nb-255)</name>
    <dbReference type="NCBI Taxonomy" id="323098"/>
    <lineage>
        <taxon>Bacteria</taxon>
        <taxon>Pseudomonadati</taxon>
        <taxon>Pseudomonadota</taxon>
        <taxon>Alphaproteobacteria</taxon>
        <taxon>Hyphomicrobiales</taxon>
        <taxon>Nitrobacteraceae</taxon>
        <taxon>Nitrobacter</taxon>
    </lineage>
</organism>
<proteinExistence type="inferred from homology"/>
<gene>
    <name evidence="1" type="primary">gltX</name>
    <name type="ordered locus">Nwi_1844</name>
</gene>
<comment type="function">
    <text evidence="1">Catalyzes the attachment of glutamate to tRNA(Glu) in a two-step reaction: glutamate is first activated by ATP to form Glu-AMP and then transferred to the acceptor end of tRNA(Glu).</text>
</comment>
<comment type="catalytic activity">
    <reaction evidence="1">
        <text>tRNA(Glu) + L-glutamate + ATP = L-glutamyl-tRNA(Glu) + AMP + diphosphate</text>
        <dbReference type="Rhea" id="RHEA:23540"/>
        <dbReference type="Rhea" id="RHEA-COMP:9663"/>
        <dbReference type="Rhea" id="RHEA-COMP:9680"/>
        <dbReference type="ChEBI" id="CHEBI:29985"/>
        <dbReference type="ChEBI" id="CHEBI:30616"/>
        <dbReference type="ChEBI" id="CHEBI:33019"/>
        <dbReference type="ChEBI" id="CHEBI:78442"/>
        <dbReference type="ChEBI" id="CHEBI:78520"/>
        <dbReference type="ChEBI" id="CHEBI:456215"/>
        <dbReference type="EC" id="6.1.1.17"/>
    </reaction>
</comment>
<comment type="subunit">
    <text evidence="1">Monomer.</text>
</comment>
<comment type="subcellular location">
    <subcellularLocation>
        <location evidence="1">Cytoplasm</location>
    </subcellularLocation>
</comment>
<comment type="similarity">
    <text evidence="1">Belongs to the class-I aminoacyl-tRNA synthetase family. Glutamate--tRNA ligase type 1 subfamily.</text>
</comment>
<comment type="sequence caution" evidence="2">
    <conflict type="erroneous initiation">
        <sequence resource="EMBL-CDS" id="ABA05104"/>
    </conflict>
</comment>
<name>SYE_NITWN</name>
<feature type="chain" id="PRO_0000237376" description="Glutamate--tRNA ligase">
    <location>
        <begin position="1"/>
        <end position="474"/>
    </location>
</feature>
<feature type="short sequence motif" description="'HIGH' region" evidence="1">
    <location>
        <begin position="11"/>
        <end position="21"/>
    </location>
</feature>
<feature type="short sequence motif" description="'KMSKS' region" evidence="1">
    <location>
        <begin position="240"/>
        <end position="244"/>
    </location>
</feature>
<feature type="binding site" evidence="1">
    <location>
        <position position="243"/>
    </location>
    <ligand>
        <name>ATP</name>
        <dbReference type="ChEBI" id="CHEBI:30616"/>
    </ligand>
</feature>